<feature type="transit peptide" description="Chloroplast" evidence="1">
    <location>
        <begin position="1"/>
        <end position="45"/>
    </location>
</feature>
<feature type="chain" id="PRO_0000003710" description="Chlorophyll a-b binding protein 6A, chloroplastic">
    <location>
        <begin position="46"/>
        <end position="246"/>
    </location>
</feature>
<feature type="transmembrane region" description="Helical" evidence="2">
    <location>
        <begin position="94"/>
        <end position="114"/>
    </location>
</feature>
<feature type="transmembrane region" description="Helical" evidence="2">
    <location>
        <begin position="133"/>
        <end position="153"/>
    </location>
</feature>
<feature type="binding site" description="axial binding residue" evidence="1">
    <location>
        <position position="49"/>
    </location>
    <ligand>
        <name>chlorophyll b</name>
        <dbReference type="ChEBI" id="CHEBI:61721"/>
        <label>1</label>
    </ligand>
    <ligandPart>
        <name>Mg</name>
        <dbReference type="ChEBI" id="CHEBI:25107"/>
    </ligandPart>
</feature>
<feature type="binding site" evidence="1">
    <location>
        <position position="69"/>
    </location>
    <ligand>
        <name>chlorophyll a</name>
        <dbReference type="ChEBI" id="CHEBI:58416"/>
        <label>1</label>
    </ligand>
</feature>
<feature type="binding site" description="axial binding residue" evidence="1">
    <location>
        <position position="88"/>
    </location>
    <ligand>
        <name>chlorophyll a</name>
        <dbReference type="ChEBI" id="CHEBI:58416"/>
        <label>1</label>
    </ligand>
    <ligandPart>
        <name>Mg</name>
        <dbReference type="ChEBI" id="CHEBI:25107"/>
    </ligandPart>
</feature>
<feature type="binding site" description="axial binding residue" evidence="1">
    <location>
        <position position="91"/>
    </location>
    <ligand>
        <name>chlorophyll a</name>
        <dbReference type="ChEBI" id="CHEBI:58416"/>
        <label>2</label>
    </ligand>
    <ligandPart>
        <name>Mg</name>
        <dbReference type="ChEBI" id="CHEBI:25107"/>
    </ligandPart>
</feature>
<feature type="binding site" evidence="1">
    <location>
        <position position="93"/>
    </location>
    <ligand>
        <name>chlorophyll b</name>
        <dbReference type="ChEBI" id="CHEBI:61721"/>
        <label>2</label>
    </ligand>
</feature>
<feature type="binding site" evidence="1">
    <location>
        <position position="130"/>
    </location>
    <ligand>
        <name>chlorophyll a</name>
        <dbReference type="ChEBI" id="CHEBI:58416"/>
        <label>3</label>
    </ligand>
</feature>
<feature type="binding site" description="axial binding residue" evidence="1">
    <location>
        <position position="134"/>
    </location>
    <ligand>
        <name>chlorophyll b</name>
        <dbReference type="ChEBI" id="CHEBI:61721"/>
        <label>2</label>
    </ligand>
    <ligandPart>
        <name>Mg</name>
        <dbReference type="ChEBI" id="CHEBI:25107"/>
    </ligandPart>
</feature>
<feature type="binding site" description="axial binding residue" evidence="1">
    <location>
        <position position="154"/>
    </location>
    <ligand>
        <name>chlorophyll b</name>
        <dbReference type="ChEBI" id="CHEBI:61721"/>
        <label>3</label>
    </ligand>
    <ligandPart>
        <name>Mg</name>
        <dbReference type="ChEBI" id="CHEBI:25107"/>
    </ligandPart>
</feature>
<feature type="binding site" evidence="1">
    <location>
        <position position="157"/>
    </location>
    <ligand>
        <name>chlorophyll b</name>
        <dbReference type="ChEBI" id="CHEBI:61721"/>
        <label>4</label>
    </ligand>
</feature>
<feature type="binding site" evidence="1">
    <location>
        <position position="191"/>
    </location>
    <ligand>
        <name>chlorophyll a</name>
        <dbReference type="ChEBI" id="CHEBI:58416"/>
        <label>5</label>
    </ligand>
</feature>
<feature type="binding site" description="axial binding residue" evidence="1">
    <location>
        <position position="192"/>
    </location>
    <ligand>
        <name>chlorophyll a</name>
        <dbReference type="ChEBI" id="CHEBI:58416"/>
        <label>3</label>
    </ligand>
    <ligandPart>
        <name>Mg</name>
        <dbReference type="ChEBI" id="CHEBI:25107"/>
    </ligandPart>
</feature>
<feature type="binding site" description="axial binding residue" evidence="1">
    <location>
        <position position="195"/>
    </location>
    <ligand>
        <name>chlorophyll a</name>
        <dbReference type="ChEBI" id="CHEBI:58416"/>
        <label>4</label>
    </ligand>
    <ligandPart>
        <name>Mg</name>
        <dbReference type="ChEBI" id="CHEBI:25107"/>
    </ligandPart>
</feature>
<feature type="binding site" evidence="1">
    <location>
        <position position="197"/>
    </location>
    <ligand>
        <name>chlorophyll a</name>
        <dbReference type="ChEBI" id="CHEBI:58416"/>
        <label>1</label>
    </ligand>
</feature>
<feature type="binding site" description="axial binding residue" evidence="1">
    <location>
        <position position="209"/>
    </location>
    <ligand>
        <name>chlorophyll a</name>
        <dbReference type="ChEBI" id="CHEBI:58416"/>
        <label>5</label>
    </ligand>
    <ligandPart>
        <name>Mg</name>
        <dbReference type="ChEBI" id="CHEBI:25107"/>
    </ligandPart>
</feature>
<feature type="binding site" description="axial binding residue" evidence="1">
    <location>
        <position position="225"/>
    </location>
    <ligand>
        <name>chlorophyll a</name>
        <dbReference type="ChEBI" id="CHEBI:58416"/>
        <label>6</label>
    </ligand>
    <ligandPart>
        <name>Mg</name>
        <dbReference type="ChEBI" id="CHEBI:25107"/>
    </ligandPart>
</feature>
<feature type="sequence conflict" description="In Ref. 2; AAA34140." evidence="3" ref="2">
    <original>Y</original>
    <variation>S</variation>
    <location>
        <position position="33"/>
    </location>
</feature>
<feature type="sequence conflict" description="In Ref. 2; AAA34140." evidence="3" ref="2">
    <original>F</original>
    <variation>S</variation>
    <location>
        <position position="39"/>
    </location>
</feature>
<feature type="sequence conflict" description="In Ref. 2; AAA34140." evidence="3" ref="2">
    <original>S</original>
    <variation>P</variation>
    <location>
        <position position="71"/>
    </location>
</feature>
<feature type="sequence conflict" description="In Ref. 2; AAA34140." evidence="3" ref="2">
    <original>I</original>
    <variation>F</variation>
    <location>
        <position position="203"/>
    </location>
</feature>
<feature type="sequence conflict" description="In Ref. 2; AAA34140." evidence="3" ref="2">
    <original>L</original>
    <variation>P</variation>
    <location>
        <position position="214"/>
    </location>
</feature>
<reference key="1">
    <citation type="journal article" date="1987" name="Proc. Natl. Acad. Sci. U.S.A.">
        <title>A cDNA clone encoding a photosystem I protein with homology to photosystem II chlorophyll a/b-binding polypeptides.</title>
        <authorList>
            <person name="Hoffman N.E."/>
            <person name="Pichersky E."/>
            <person name="Malik V.S."/>
            <person name="Castresana C."/>
            <person name="Ko K."/>
            <person name="Darr S.C."/>
            <person name="Cashmore A.R."/>
        </authorList>
    </citation>
    <scope>NUCLEOTIDE SEQUENCE [MRNA]</scope>
</reference>
<reference key="2">
    <citation type="journal article" date="1987" name="Plant Mol. Biol.">
        <title>Molecular characterization and genetic mapping of DNA sequences encoding the type I chlorophyll a/b-binding polypeptide of photosystem I in Lycopersicon esculentum (tomato).</title>
        <authorList>
            <person name="Pichersky E."/>
            <person name="Hoffman N.E."/>
            <person name="Bernatzky R."/>
            <person name="Piechulla B."/>
            <person name="Tanksley S.D."/>
            <person name="Cashmore A.R."/>
        </authorList>
        <dbReference type="AGRICOLA" id="IND91054590"/>
    </citation>
    <scope>NUCLEOTIDE SEQUENCE [GENOMIC DNA]</scope>
</reference>
<gene>
    <name type="primary">CAB6A</name>
</gene>
<proteinExistence type="evidence at transcript level"/>
<organism>
    <name type="scientific">Solanum lycopersicum</name>
    <name type="common">Tomato</name>
    <name type="synonym">Lycopersicon esculentum</name>
    <dbReference type="NCBI Taxonomy" id="4081"/>
    <lineage>
        <taxon>Eukaryota</taxon>
        <taxon>Viridiplantae</taxon>
        <taxon>Streptophyta</taxon>
        <taxon>Embryophyta</taxon>
        <taxon>Tracheophyta</taxon>
        <taxon>Spermatophyta</taxon>
        <taxon>Magnoliopsida</taxon>
        <taxon>eudicotyledons</taxon>
        <taxon>Gunneridae</taxon>
        <taxon>Pentapetalae</taxon>
        <taxon>asterids</taxon>
        <taxon>lamiids</taxon>
        <taxon>Solanales</taxon>
        <taxon>Solanaceae</taxon>
        <taxon>Solanoideae</taxon>
        <taxon>Solaneae</taxon>
        <taxon>Solanum</taxon>
        <taxon>Solanum subgen. Lycopersicon</taxon>
    </lineage>
</organism>
<accession>P12360</accession>
<sequence length="246" mass="26575">MASNTLMSCGIPAVCPSFLSSTKSKFAAAMPVYVGATNFMSRFSMSADWMPGQPRPSYLDGSAPGDFGFDSLGLGEVPANLERYKESELIHCRWAMLAVPGIIVPEALGLGNWVKAQEWAAIPGGQATYLGQPVPWGTLPTILAIEFLAIAFVEHQRSMEKDSEKKKYPGGAFDPLGYSKDPAKFEELKVKEIKNGRLALLAIVGFCVQQSAYLGTGPLENLATHLADPWHNNIGDVIIPKGIFPN</sequence>
<evidence type="ECO:0000250" key="1"/>
<evidence type="ECO:0000255" key="2"/>
<evidence type="ECO:0000305" key="3"/>
<dbReference type="EMBL" id="J03558">
    <property type="protein sequence ID" value="AAA34186.1"/>
    <property type="molecule type" value="mRNA"/>
</dbReference>
<dbReference type="EMBL" id="M17633">
    <property type="protein sequence ID" value="AAA34140.1"/>
    <property type="molecule type" value="Genomic_DNA"/>
</dbReference>
<dbReference type="PIR" id="S00443">
    <property type="entry name" value="S00443"/>
</dbReference>
<dbReference type="PIR" id="S06329">
    <property type="entry name" value="S06329"/>
</dbReference>
<dbReference type="RefSeq" id="NP_001234032.2">
    <property type="nucleotide sequence ID" value="NM_001247103.2"/>
</dbReference>
<dbReference type="SMR" id="P12360"/>
<dbReference type="FunCoup" id="P12360">
    <property type="interactions" value="1037"/>
</dbReference>
<dbReference type="STRING" id="4081.P12360"/>
<dbReference type="PaxDb" id="4081-Solyc05g056070.2.1"/>
<dbReference type="GeneID" id="544310"/>
<dbReference type="KEGG" id="sly:544310"/>
<dbReference type="eggNOG" id="ENOG502QTYF">
    <property type="taxonomic scope" value="Eukaryota"/>
</dbReference>
<dbReference type="InParanoid" id="P12360"/>
<dbReference type="OrthoDB" id="423598at2759"/>
<dbReference type="Proteomes" id="UP000004994">
    <property type="component" value="Unplaced"/>
</dbReference>
<dbReference type="ExpressionAtlas" id="P12360">
    <property type="expression patterns" value="baseline and differential"/>
</dbReference>
<dbReference type="GO" id="GO:0009535">
    <property type="term" value="C:chloroplast thylakoid membrane"/>
    <property type="evidence" value="ECO:0007669"/>
    <property type="project" value="UniProtKB-SubCell"/>
</dbReference>
<dbReference type="GO" id="GO:0009522">
    <property type="term" value="C:photosystem I"/>
    <property type="evidence" value="ECO:0007669"/>
    <property type="project" value="UniProtKB-KW"/>
</dbReference>
<dbReference type="GO" id="GO:0009523">
    <property type="term" value="C:photosystem II"/>
    <property type="evidence" value="ECO:0007669"/>
    <property type="project" value="UniProtKB-KW"/>
</dbReference>
<dbReference type="GO" id="GO:0016168">
    <property type="term" value="F:chlorophyll binding"/>
    <property type="evidence" value="ECO:0007669"/>
    <property type="project" value="UniProtKB-KW"/>
</dbReference>
<dbReference type="GO" id="GO:0046872">
    <property type="term" value="F:metal ion binding"/>
    <property type="evidence" value="ECO:0007669"/>
    <property type="project" value="UniProtKB-KW"/>
</dbReference>
<dbReference type="GO" id="GO:0009768">
    <property type="term" value="P:photosynthesis, light harvesting in photosystem I"/>
    <property type="evidence" value="ECO:0000318"/>
    <property type="project" value="GO_Central"/>
</dbReference>
<dbReference type="GO" id="GO:0009416">
    <property type="term" value="P:response to light stimulus"/>
    <property type="evidence" value="ECO:0000318"/>
    <property type="project" value="GO_Central"/>
</dbReference>
<dbReference type="FunFam" id="1.10.3460.10:FF:000004">
    <property type="entry name" value="Chlorophyll a-b binding protein, chloroplastic"/>
    <property type="match status" value="1"/>
</dbReference>
<dbReference type="Gene3D" id="1.10.3460.10">
    <property type="entry name" value="Chlorophyll a/b binding protein domain"/>
    <property type="match status" value="1"/>
</dbReference>
<dbReference type="InterPro" id="IPR001344">
    <property type="entry name" value="Chloro_AB-bd_pln"/>
</dbReference>
<dbReference type="InterPro" id="IPR022796">
    <property type="entry name" value="Chloroa_b-bind"/>
</dbReference>
<dbReference type="PANTHER" id="PTHR21649">
    <property type="entry name" value="CHLOROPHYLL A/B BINDING PROTEIN"/>
    <property type="match status" value="1"/>
</dbReference>
<dbReference type="Pfam" id="PF00504">
    <property type="entry name" value="Chloroa_b-bind"/>
    <property type="match status" value="1"/>
</dbReference>
<dbReference type="SUPFAM" id="SSF103511">
    <property type="entry name" value="Chlorophyll a-b binding protein"/>
    <property type="match status" value="1"/>
</dbReference>
<protein>
    <recommendedName>
        <fullName>Chlorophyll a-b binding protein 6A, chloroplastic</fullName>
    </recommendedName>
    <alternativeName>
        <fullName>LHCI type I CAB-6A</fullName>
    </alternativeName>
    <alternativeName>
        <fullName>Light-harvesting complex I 26 kDa protein</fullName>
    </alternativeName>
</protein>
<keyword id="KW-0148">Chlorophyll</keyword>
<keyword id="KW-0150">Chloroplast</keyword>
<keyword id="KW-0157">Chromophore</keyword>
<keyword id="KW-0460">Magnesium</keyword>
<keyword id="KW-0472">Membrane</keyword>
<keyword id="KW-0479">Metal-binding</keyword>
<keyword id="KW-0597">Phosphoprotein</keyword>
<keyword id="KW-0602">Photosynthesis</keyword>
<keyword id="KW-0603">Photosystem I</keyword>
<keyword id="KW-0604">Photosystem II</keyword>
<keyword id="KW-0934">Plastid</keyword>
<keyword id="KW-1185">Reference proteome</keyword>
<keyword id="KW-0793">Thylakoid</keyword>
<keyword id="KW-0809">Transit peptide</keyword>
<keyword id="KW-0812">Transmembrane</keyword>
<keyword id="KW-1133">Transmembrane helix</keyword>
<comment type="function">
    <text>The light-harvesting complex (LHC) functions as a light receptor, it captures and delivers excitation energy to photosystems with which it is closely associated.</text>
</comment>
<comment type="cofactor">
    <text evidence="1">Binds at least 14 chlorophylls (8 Chl-a and 6 Chl-b) and carotenoids such as lutein and neoxanthin.</text>
</comment>
<comment type="subunit">
    <text>The LHC complex consists of chlorophyll a-b binding proteins.</text>
</comment>
<comment type="subcellular location">
    <subcellularLocation>
        <location>Plastid</location>
        <location>Chloroplast thylakoid membrane</location>
        <topology>Multi-pass membrane protein</topology>
    </subcellularLocation>
</comment>
<comment type="domain">
    <text>The N-terminus of the protein extends into the stroma where it is involved with adhesion of granal membranes and post-translational modifications; both are believed to mediate the distribution of excitation energy between photosystems I and II.</text>
</comment>
<comment type="PTM">
    <text evidence="1">Photoregulated by reversible phosphorylation of its threonine residues.</text>
</comment>
<comment type="similarity">
    <text evidence="3">Belongs to the light-harvesting chlorophyll a/b-binding (LHC) protein family.</text>
</comment>
<name>CB11_SOLLC</name>